<keyword id="KW-0963">Cytoplasm</keyword>
<keyword id="KW-0274">FAD</keyword>
<keyword id="KW-0285">Flavoprotein</keyword>
<keyword id="KW-0520">NAD</keyword>
<keyword id="KW-0819">tRNA processing</keyword>
<sequence>MQDHHSTNESFDIVVIGGGHAGCEAAITSAKLGFSTALFTINLDRIAWQPCNPAVGGPAKSQLVHEVDALGGIIGKLADKTAIQKRILNASKGPAVWALRAQTDKREYSKKMIEILQNTDNLSLKEAMITELDIAKTEEIGLNSKKIVKKRIKGVRTFFGSYYSARSVIITAGTFLEGRIWIGNKSMSAGRSGEQAAKGLTKNLHEIGIKTERLKTGTPARVDKRSIIFDELDAQPSTAADKYFSFDPNIKNNMPQVSCHITRTTTKTHQLIRDNLHLTPIYGGFIDSKGPRYCPSIEDKIVKFADKESHQIFLEPEGINTPEIYVQGFSTGLPENIQLELLRTLPGLSECKMLRPAYAVEYDYIPATQLQTSLETKEIEYLFSAGQINGTTGYEEAAAQGLVAGVNATRKLNEKDPIIFTRESSYIGTMINDLITKDLKEPYRVLTSRSEYRLTLRGDNADRRLTPLGYQIGLIDEKRWWAYQEKMNLLEEEKLRLNNTRLKNTDEISKNIELDTGSKIKGSTTLKELLKRPNFHYSDLIKYNLTEKNLGSSIQEGVEIDIKYEGYLKRQKNNIEQINRQSCKSLPQEINYEKIDTLSLEARENLNKIKPKNFGDASKIPGVSKADLTALLVWLKIREIKKEKANIFVKKSYHLKSNPSEH</sequence>
<comment type="function">
    <text evidence="1">NAD-binding protein involved in the addition of a carboxymethylaminomethyl (cmnm) group at the wobble position (U34) of certain tRNAs, forming tRNA-cmnm(5)s(2)U34.</text>
</comment>
<comment type="cofactor">
    <cofactor evidence="1">
        <name>FAD</name>
        <dbReference type="ChEBI" id="CHEBI:57692"/>
    </cofactor>
</comment>
<comment type="subunit">
    <text evidence="1">Homodimer. Heterotetramer of two MnmE and two MnmG subunits.</text>
</comment>
<comment type="subcellular location">
    <subcellularLocation>
        <location evidence="1">Cytoplasm</location>
    </subcellularLocation>
</comment>
<comment type="similarity">
    <text evidence="1">Belongs to the MnmG family.</text>
</comment>
<evidence type="ECO:0000255" key="1">
    <source>
        <dbReference type="HAMAP-Rule" id="MF_00129"/>
    </source>
</evidence>
<protein>
    <recommendedName>
        <fullName evidence="1">tRNA uridine 5-carboxymethylaminomethyl modification enzyme MnmG</fullName>
    </recommendedName>
    <alternativeName>
        <fullName evidence="1">Glucose-inhibited division protein A</fullName>
    </alternativeName>
</protein>
<feature type="chain" id="PRO_0000345318" description="tRNA uridine 5-carboxymethylaminomethyl modification enzyme MnmG">
    <location>
        <begin position="1"/>
        <end position="662"/>
    </location>
</feature>
<feature type="binding site" evidence="1">
    <location>
        <begin position="17"/>
        <end position="22"/>
    </location>
    <ligand>
        <name>FAD</name>
        <dbReference type="ChEBI" id="CHEBI:57692"/>
    </ligand>
</feature>
<feature type="binding site" evidence="1">
    <location>
        <begin position="290"/>
        <end position="304"/>
    </location>
    <ligand>
        <name>NAD(+)</name>
        <dbReference type="ChEBI" id="CHEBI:57540"/>
    </ligand>
</feature>
<proteinExistence type="inferred from homology"/>
<gene>
    <name evidence="1" type="primary">mnmG</name>
    <name evidence="1" type="synonym">gidA</name>
    <name type="ordered locus">PMT9312_1767</name>
</gene>
<name>MNMG_PROM9</name>
<organism>
    <name type="scientific">Prochlorococcus marinus (strain MIT 9312)</name>
    <dbReference type="NCBI Taxonomy" id="74546"/>
    <lineage>
        <taxon>Bacteria</taxon>
        <taxon>Bacillati</taxon>
        <taxon>Cyanobacteriota</taxon>
        <taxon>Cyanophyceae</taxon>
        <taxon>Synechococcales</taxon>
        <taxon>Prochlorococcaceae</taxon>
        <taxon>Prochlorococcus</taxon>
    </lineage>
</organism>
<reference key="1">
    <citation type="journal article" date="2006" name="Science">
        <title>Genomic islands and the ecology and evolution of Prochlorococcus.</title>
        <authorList>
            <person name="Coleman M.L."/>
            <person name="Sullivan M.B."/>
            <person name="Martiny A.C."/>
            <person name="Steglich C."/>
            <person name="Barry K."/>
            <person name="Delong E.F."/>
            <person name="Chisholm S.W."/>
        </authorList>
    </citation>
    <scope>NUCLEOTIDE SEQUENCE [LARGE SCALE GENOMIC DNA]</scope>
    <source>
        <strain>MIT 9312</strain>
    </source>
</reference>
<accession>Q317W7</accession>
<dbReference type="EMBL" id="CP000111">
    <property type="protein sequence ID" value="ABB50828.1"/>
    <property type="molecule type" value="Genomic_DNA"/>
</dbReference>
<dbReference type="RefSeq" id="WP_011377309.1">
    <property type="nucleotide sequence ID" value="NC_007577.1"/>
</dbReference>
<dbReference type="SMR" id="Q317W7"/>
<dbReference type="STRING" id="74546.PMT9312_1767"/>
<dbReference type="KEGG" id="pmi:PMT9312_1767"/>
<dbReference type="eggNOG" id="COG0445">
    <property type="taxonomic scope" value="Bacteria"/>
</dbReference>
<dbReference type="HOGENOM" id="CLU_007831_2_2_3"/>
<dbReference type="OrthoDB" id="9815560at2"/>
<dbReference type="Proteomes" id="UP000002715">
    <property type="component" value="Chromosome"/>
</dbReference>
<dbReference type="GO" id="GO:0005737">
    <property type="term" value="C:cytoplasm"/>
    <property type="evidence" value="ECO:0007669"/>
    <property type="project" value="UniProtKB-SubCell"/>
</dbReference>
<dbReference type="GO" id="GO:0050660">
    <property type="term" value="F:flavin adenine dinucleotide binding"/>
    <property type="evidence" value="ECO:0007669"/>
    <property type="project" value="UniProtKB-UniRule"/>
</dbReference>
<dbReference type="GO" id="GO:0030488">
    <property type="term" value="P:tRNA methylation"/>
    <property type="evidence" value="ECO:0007669"/>
    <property type="project" value="TreeGrafter"/>
</dbReference>
<dbReference type="GO" id="GO:0002098">
    <property type="term" value="P:tRNA wobble uridine modification"/>
    <property type="evidence" value="ECO:0007669"/>
    <property type="project" value="InterPro"/>
</dbReference>
<dbReference type="FunFam" id="1.10.10.1800:FF:000001">
    <property type="entry name" value="tRNA uridine 5-carboxymethylaminomethyl modification enzyme MnmG"/>
    <property type="match status" value="1"/>
</dbReference>
<dbReference type="FunFam" id="1.10.150.570:FF:000001">
    <property type="entry name" value="tRNA uridine 5-carboxymethylaminomethyl modification enzyme MnmG"/>
    <property type="match status" value="1"/>
</dbReference>
<dbReference type="FunFam" id="3.50.50.60:FF:000094">
    <property type="entry name" value="tRNA uridine 5-carboxymethylaminomethyl modification enzyme MnmG"/>
    <property type="match status" value="1"/>
</dbReference>
<dbReference type="Gene3D" id="3.50.50.60">
    <property type="entry name" value="FAD/NAD(P)-binding domain"/>
    <property type="match status" value="2"/>
</dbReference>
<dbReference type="Gene3D" id="1.10.150.570">
    <property type="entry name" value="GidA associated domain, C-terminal subdomain"/>
    <property type="match status" value="1"/>
</dbReference>
<dbReference type="Gene3D" id="1.10.10.1800">
    <property type="entry name" value="tRNA uridine 5-carboxymethylaminomethyl modification enzyme MnmG/GidA"/>
    <property type="match status" value="1"/>
</dbReference>
<dbReference type="HAMAP" id="MF_00129">
    <property type="entry name" value="MnmG_GidA"/>
    <property type="match status" value="1"/>
</dbReference>
<dbReference type="InterPro" id="IPR036188">
    <property type="entry name" value="FAD/NAD-bd_sf"/>
</dbReference>
<dbReference type="InterPro" id="IPR049312">
    <property type="entry name" value="GIDA_C_N"/>
</dbReference>
<dbReference type="InterPro" id="IPR004416">
    <property type="entry name" value="MnmG"/>
</dbReference>
<dbReference type="InterPro" id="IPR002218">
    <property type="entry name" value="MnmG-rel"/>
</dbReference>
<dbReference type="InterPro" id="IPR020595">
    <property type="entry name" value="MnmG-rel_CS"/>
</dbReference>
<dbReference type="InterPro" id="IPR026904">
    <property type="entry name" value="MnmG_C"/>
</dbReference>
<dbReference type="InterPro" id="IPR047001">
    <property type="entry name" value="MnmG_C_subdom"/>
</dbReference>
<dbReference type="InterPro" id="IPR044920">
    <property type="entry name" value="MnmG_C_subdom_sf"/>
</dbReference>
<dbReference type="InterPro" id="IPR040131">
    <property type="entry name" value="MnmG_N"/>
</dbReference>
<dbReference type="NCBIfam" id="TIGR00136">
    <property type="entry name" value="mnmG_gidA"/>
    <property type="match status" value="1"/>
</dbReference>
<dbReference type="PANTHER" id="PTHR11806">
    <property type="entry name" value="GLUCOSE INHIBITED DIVISION PROTEIN A"/>
    <property type="match status" value="1"/>
</dbReference>
<dbReference type="PANTHER" id="PTHR11806:SF0">
    <property type="entry name" value="PROTEIN MTO1 HOMOLOG, MITOCHONDRIAL"/>
    <property type="match status" value="1"/>
</dbReference>
<dbReference type="Pfam" id="PF01134">
    <property type="entry name" value="GIDA"/>
    <property type="match status" value="1"/>
</dbReference>
<dbReference type="Pfam" id="PF21680">
    <property type="entry name" value="GIDA_C_1st"/>
    <property type="match status" value="1"/>
</dbReference>
<dbReference type="Pfam" id="PF13932">
    <property type="entry name" value="SAM_GIDA_C"/>
    <property type="match status" value="1"/>
</dbReference>
<dbReference type="SMART" id="SM01228">
    <property type="entry name" value="GIDA_assoc_3"/>
    <property type="match status" value="1"/>
</dbReference>
<dbReference type="SUPFAM" id="SSF51905">
    <property type="entry name" value="FAD/NAD(P)-binding domain"/>
    <property type="match status" value="1"/>
</dbReference>
<dbReference type="PROSITE" id="PS01280">
    <property type="entry name" value="GIDA_1"/>
    <property type="match status" value="1"/>
</dbReference>
<dbReference type="PROSITE" id="PS01281">
    <property type="entry name" value="GIDA_2"/>
    <property type="match status" value="1"/>
</dbReference>